<comment type="function">
    <text evidence="1">Forms part of the ribosomal stalk which helps the ribosome interact with GTP-bound translation factors. Is thus essential for accurate translation.</text>
</comment>
<comment type="subunit">
    <text evidence="1">Homodimer. Part of the ribosomal stalk of the 50S ribosomal subunit. Forms a multimeric L10(L12)X complex, where L10 forms an elongated spine to which 2 to 4 L12 dimers bind in a sequential fashion. Binds GTP-bound translation factors.</text>
</comment>
<comment type="similarity">
    <text evidence="1">Belongs to the bacterial ribosomal protein bL12 family.</text>
</comment>
<gene>
    <name evidence="1" type="primary">rplL</name>
    <name type="ordered locus">NAMH_0179</name>
</gene>
<keyword id="KW-0687">Ribonucleoprotein</keyword>
<keyword id="KW-0689">Ribosomal protein</keyword>
<accession>B9L7J5</accession>
<reference key="1">
    <citation type="journal article" date="2009" name="PLoS Genet.">
        <title>Adaptations to submarine hydrothermal environments exemplified by the genome of Nautilia profundicola.</title>
        <authorList>
            <person name="Campbell B.J."/>
            <person name="Smith J.L."/>
            <person name="Hanson T.E."/>
            <person name="Klotz M.G."/>
            <person name="Stein L.Y."/>
            <person name="Lee C.K."/>
            <person name="Wu D."/>
            <person name="Robinson J.M."/>
            <person name="Khouri H.M."/>
            <person name="Eisen J.A."/>
            <person name="Cary S.C."/>
        </authorList>
    </citation>
    <scope>NUCLEOTIDE SEQUENCE [LARGE SCALE GENOMIC DNA]</scope>
    <source>
        <strain>ATCC BAA-1463 / DSM 18972 / AmH</strain>
    </source>
</reference>
<dbReference type="EMBL" id="CP001279">
    <property type="protein sequence ID" value="ACM92568.1"/>
    <property type="molecule type" value="Genomic_DNA"/>
</dbReference>
<dbReference type="RefSeq" id="WP_012663939.1">
    <property type="nucleotide sequence ID" value="NC_012115.1"/>
</dbReference>
<dbReference type="SMR" id="B9L7J5"/>
<dbReference type="STRING" id="598659.NAMH_0179"/>
<dbReference type="KEGG" id="nam:NAMH_0179"/>
<dbReference type="eggNOG" id="COG0222">
    <property type="taxonomic scope" value="Bacteria"/>
</dbReference>
<dbReference type="HOGENOM" id="CLU_086499_3_2_7"/>
<dbReference type="OrthoDB" id="9811748at2"/>
<dbReference type="Proteomes" id="UP000000448">
    <property type="component" value="Chromosome"/>
</dbReference>
<dbReference type="GO" id="GO:0022625">
    <property type="term" value="C:cytosolic large ribosomal subunit"/>
    <property type="evidence" value="ECO:0007669"/>
    <property type="project" value="TreeGrafter"/>
</dbReference>
<dbReference type="GO" id="GO:0003729">
    <property type="term" value="F:mRNA binding"/>
    <property type="evidence" value="ECO:0007669"/>
    <property type="project" value="TreeGrafter"/>
</dbReference>
<dbReference type="GO" id="GO:0003735">
    <property type="term" value="F:structural constituent of ribosome"/>
    <property type="evidence" value="ECO:0007669"/>
    <property type="project" value="InterPro"/>
</dbReference>
<dbReference type="GO" id="GO:0006412">
    <property type="term" value="P:translation"/>
    <property type="evidence" value="ECO:0007669"/>
    <property type="project" value="UniProtKB-UniRule"/>
</dbReference>
<dbReference type="CDD" id="cd00387">
    <property type="entry name" value="Ribosomal_L7_L12"/>
    <property type="match status" value="1"/>
</dbReference>
<dbReference type="FunFam" id="3.30.1390.10:FF:000001">
    <property type="entry name" value="50S ribosomal protein L7/L12"/>
    <property type="match status" value="1"/>
</dbReference>
<dbReference type="Gene3D" id="3.30.1390.10">
    <property type="match status" value="1"/>
</dbReference>
<dbReference type="Gene3D" id="1.20.5.710">
    <property type="entry name" value="Single helix bin"/>
    <property type="match status" value="1"/>
</dbReference>
<dbReference type="HAMAP" id="MF_00368">
    <property type="entry name" value="Ribosomal_bL12"/>
    <property type="match status" value="1"/>
</dbReference>
<dbReference type="InterPro" id="IPR000206">
    <property type="entry name" value="Ribosomal_bL12"/>
</dbReference>
<dbReference type="InterPro" id="IPR013823">
    <property type="entry name" value="Ribosomal_bL12_C"/>
</dbReference>
<dbReference type="InterPro" id="IPR014719">
    <property type="entry name" value="Ribosomal_bL12_C/ClpS-like"/>
</dbReference>
<dbReference type="InterPro" id="IPR008932">
    <property type="entry name" value="Ribosomal_bL12_oligo"/>
</dbReference>
<dbReference type="InterPro" id="IPR036235">
    <property type="entry name" value="Ribosomal_bL12_oligo_N_sf"/>
</dbReference>
<dbReference type="NCBIfam" id="TIGR00855">
    <property type="entry name" value="L12"/>
    <property type="match status" value="1"/>
</dbReference>
<dbReference type="PANTHER" id="PTHR45987">
    <property type="entry name" value="39S RIBOSOMAL PROTEIN L12"/>
    <property type="match status" value="1"/>
</dbReference>
<dbReference type="PANTHER" id="PTHR45987:SF4">
    <property type="entry name" value="LARGE RIBOSOMAL SUBUNIT PROTEIN BL12M"/>
    <property type="match status" value="1"/>
</dbReference>
<dbReference type="Pfam" id="PF00542">
    <property type="entry name" value="Ribosomal_L12"/>
    <property type="match status" value="1"/>
</dbReference>
<dbReference type="Pfam" id="PF16320">
    <property type="entry name" value="Ribosomal_L12_N"/>
    <property type="match status" value="1"/>
</dbReference>
<dbReference type="SUPFAM" id="SSF54736">
    <property type="entry name" value="ClpS-like"/>
    <property type="match status" value="1"/>
</dbReference>
<dbReference type="SUPFAM" id="SSF48300">
    <property type="entry name" value="Ribosomal protein L7/12, oligomerisation (N-terminal) domain"/>
    <property type="match status" value="1"/>
</dbReference>
<proteinExistence type="inferred from homology"/>
<feature type="chain" id="PRO_1000195818" description="Large ribosomal subunit protein bL12">
    <location>
        <begin position="1"/>
        <end position="124"/>
    </location>
</feature>
<evidence type="ECO:0000255" key="1">
    <source>
        <dbReference type="HAMAP-Rule" id="MF_00368"/>
    </source>
</evidence>
<evidence type="ECO:0000305" key="2"/>
<name>RL7_NAUPA</name>
<protein>
    <recommendedName>
        <fullName evidence="1">Large ribosomal subunit protein bL12</fullName>
    </recommendedName>
    <alternativeName>
        <fullName evidence="2">50S ribosomal protein L7/L12</fullName>
    </alternativeName>
</protein>
<sequence length="124" mass="13130">MACTFEQILETIENLTVKELNELVKLFEEKFDVSAQPTVVAGAAGGAAGGAGEEKTEFDVILKDAGAKKINVIKVVRQITGAGLKEAKEIVDGAPSTIKEAVSKEEAEEIKKQLEEAGATVEVK</sequence>
<organism>
    <name type="scientific">Nautilia profundicola (strain ATCC BAA-1463 / DSM 18972 / AmH)</name>
    <dbReference type="NCBI Taxonomy" id="598659"/>
    <lineage>
        <taxon>Bacteria</taxon>
        <taxon>Pseudomonadati</taxon>
        <taxon>Campylobacterota</taxon>
        <taxon>Epsilonproteobacteria</taxon>
        <taxon>Nautiliales</taxon>
        <taxon>Nautiliaceae</taxon>
        <taxon>Nautilia</taxon>
    </lineage>
</organism>